<evidence type="ECO:0000255" key="1">
    <source>
        <dbReference type="HAMAP-Rule" id="MF_00140"/>
    </source>
</evidence>
<accession>Q92SI9</accession>
<keyword id="KW-0030">Aminoacyl-tRNA synthetase</keyword>
<keyword id="KW-0067">ATP-binding</keyword>
<keyword id="KW-0963">Cytoplasm</keyword>
<keyword id="KW-0436">Ligase</keyword>
<keyword id="KW-0547">Nucleotide-binding</keyword>
<keyword id="KW-0648">Protein biosynthesis</keyword>
<keyword id="KW-1185">Reference proteome</keyword>
<dbReference type="EC" id="6.1.1.2" evidence="1"/>
<dbReference type="EMBL" id="AL591688">
    <property type="protein sequence ID" value="CAC41836.1"/>
    <property type="molecule type" value="Genomic_DNA"/>
</dbReference>
<dbReference type="RefSeq" id="NP_384505.1">
    <property type="nucleotide sequence ID" value="NC_003047.1"/>
</dbReference>
<dbReference type="RefSeq" id="WP_010968551.1">
    <property type="nucleotide sequence ID" value="NC_003047.1"/>
</dbReference>
<dbReference type="SMR" id="Q92SI9"/>
<dbReference type="EnsemblBacteria" id="CAC41836">
    <property type="protein sequence ID" value="CAC41836"/>
    <property type="gene ID" value="SMc01121"/>
</dbReference>
<dbReference type="KEGG" id="sme:SMc01121"/>
<dbReference type="PATRIC" id="fig|266834.11.peg.1772"/>
<dbReference type="eggNOG" id="COG0180">
    <property type="taxonomic scope" value="Bacteria"/>
</dbReference>
<dbReference type="HOGENOM" id="CLU_029244_1_4_5"/>
<dbReference type="OrthoDB" id="9801042at2"/>
<dbReference type="Proteomes" id="UP000001976">
    <property type="component" value="Chromosome"/>
</dbReference>
<dbReference type="GO" id="GO:0005829">
    <property type="term" value="C:cytosol"/>
    <property type="evidence" value="ECO:0007669"/>
    <property type="project" value="TreeGrafter"/>
</dbReference>
<dbReference type="GO" id="GO:0005524">
    <property type="term" value="F:ATP binding"/>
    <property type="evidence" value="ECO:0007669"/>
    <property type="project" value="UniProtKB-UniRule"/>
</dbReference>
<dbReference type="GO" id="GO:0004830">
    <property type="term" value="F:tryptophan-tRNA ligase activity"/>
    <property type="evidence" value="ECO:0007669"/>
    <property type="project" value="UniProtKB-UniRule"/>
</dbReference>
<dbReference type="GO" id="GO:0006436">
    <property type="term" value="P:tryptophanyl-tRNA aminoacylation"/>
    <property type="evidence" value="ECO:0007669"/>
    <property type="project" value="UniProtKB-UniRule"/>
</dbReference>
<dbReference type="CDD" id="cd00806">
    <property type="entry name" value="TrpRS_core"/>
    <property type="match status" value="1"/>
</dbReference>
<dbReference type="Gene3D" id="3.40.50.620">
    <property type="entry name" value="HUPs"/>
    <property type="match status" value="1"/>
</dbReference>
<dbReference type="Gene3D" id="1.10.240.10">
    <property type="entry name" value="Tyrosyl-Transfer RNA Synthetase"/>
    <property type="match status" value="1"/>
</dbReference>
<dbReference type="HAMAP" id="MF_00140_B">
    <property type="entry name" value="Trp_tRNA_synth_B"/>
    <property type="match status" value="1"/>
</dbReference>
<dbReference type="InterPro" id="IPR001412">
    <property type="entry name" value="aa-tRNA-synth_I_CS"/>
</dbReference>
<dbReference type="InterPro" id="IPR002305">
    <property type="entry name" value="aa-tRNA-synth_Ic"/>
</dbReference>
<dbReference type="InterPro" id="IPR014729">
    <property type="entry name" value="Rossmann-like_a/b/a_fold"/>
</dbReference>
<dbReference type="InterPro" id="IPR002306">
    <property type="entry name" value="Trp-tRNA-ligase"/>
</dbReference>
<dbReference type="InterPro" id="IPR024109">
    <property type="entry name" value="Trp-tRNA-ligase_bac-type"/>
</dbReference>
<dbReference type="InterPro" id="IPR050203">
    <property type="entry name" value="Trp-tRNA_synthetase"/>
</dbReference>
<dbReference type="NCBIfam" id="TIGR00233">
    <property type="entry name" value="trpS"/>
    <property type="match status" value="1"/>
</dbReference>
<dbReference type="PANTHER" id="PTHR43766">
    <property type="entry name" value="TRYPTOPHAN--TRNA LIGASE, MITOCHONDRIAL"/>
    <property type="match status" value="1"/>
</dbReference>
<dbReference type="PANTHER" id="PTHR43766:SF1">
    <property type="entry name" value="TRYPTOPHAN--TRNA LIGASE, MITOCHONDRIAL"/>
    <property type="match status" value="1"/>
</dbReference>
<dbReference type="Pfam" id="PF00579">
    <property type="entry name" value="tRNA-synt_1b"/>
    <property type="match status" value="1"/>
</dbReference>
<dbReference type="PRINTS" id="PR01039">
    <property type="entry name" value="TRNASYNTHTRP"/>
</dbReference>
<dbReference type="SUPFAM" id="SSF52374">
    <property type="entry name" value="Nucleotidylyl transferase"/>
    <property type="match status" value="1"/>
</dbReference>
<dbReference type="PROSITE" id="PS00178">
    <property type="entry name" value="AA_TRNA_LIGASE_I"/>
    <property type="match status" value="1"/>
</dbReference>
<comment type="function">
    <text evidence="1">Catalyzes the attachment of tryptophan to tRNA(Trp).</text>
</comment>
<comment type="catalytic activity">
    <reaction evidence="1">
        <text>tRNA(Trp) + L-tryptophan + ATP = L-tryptophyl-tRNA(Trp) + AMP + diphosphate + H(+)</text>
        <dbReference type="Rhea" id="RHEA:24080"/>
        <dbReference type="Rhea" id="RHEA-COMP:9671"/>
        <dbReference type="Rhea" id="RHEA-COMP:9705"/>
        <dbReference type="ChEBI" id="CHEBI:15378"/>
        <dbReference type="ChEBI" id="CHEBI:30616"/>
        <dbReference type="ChEBI" id="CHEBI:33019"/>
        <dbReference type="ChEBI" id="CHEBI:57912"/>
        <dbReference type="ChEBI" id="CHEBI:78442"/>
        <dbReference type="ChEBI" id="CHEBI:78535"/>
        <dbReference type="ChEBI" id="CHEBI:456215"/>
        <dbReference type="EC" id="6.1.1.2"/>
    </reaction>
</comment>
<comment type="subunit">
    <text evidence="1">Homodimer.</text>
</comment>
<comment type="subcellular location">
    <subcellularLocation>
        <location evidence="1">Cytoplasm</location>
    </subcellularLocation>
</comment>
<comment type="similarity">
    <text evidence="1">Belongs to the class-I aminoacyl-tRNA synthetase family.</text>
</comment>
<feature type="chain" id="PRO_0000136667" description="Tryptophan--tRNA ligase">
    <location>
        <begin position="1"/>
        <end position="354"/>
    </location>
</feature>
<feature type="short sequence motif" description="'HIGH' region" evidence="1">
    <location>
        <begin position="14"/>
        <end position="22"/>
    </location>
</feature>
<feature type="short sequence motif" description="'KMSKS' region" evidence="1">
    <location>
        <begin position="217"/>
        <end position="221"/>
    </location>
</feature>
<feature type="binding site" evidence="1">
    <location>
        <begin position="13"/>
        <end position="15"/>
    </location>
    <ligand>
        <name>ATP</name>
        <dbReference type="ChEBI" id="CHEBI:30616"/>
    </ligand>
</feature>
<feature type="binding site" evidence="1">
    <location>
        <begin position="21"/>
        <end position="22"/>
    </location>
    <ligand>
        <name>ATP</name>
        <dbReference type="ChEBI" id="CHEBI:30616"/>
    </ligand>
</feature>
<feature type="binding site" evidence="1">
    <location>
        <position position="137"/>
    </location>
    <ligand>
        <name>L-tryptophan</name>
        <dbReference type="ChEBI" id="CHEBI:57912"/>
    </ligand>
</feature>
<feature type="binding site" evidence="1">
    <location>
        <begin position="149"/>
        <end position="151"/>
    </location>
    <ligand>
        <name>ATP</name>
        <dbReference type="ChEBI" id="CHEBI:30616"/>
    </ligand>
</feature>
<feature type="binding site" evidence="1">
    <location>
        <position position="208"/>
    </location>
    <ligand>
        <name>ATP</name>
        <dbReference type="ChEBI" id="CHEBI:30616"/>
    </ligand>
</feature>
<feature type="binding site" evidence="1">
    <location>
        <begin position="217"/>
        <end position="221"/>
    </location>
    <ligand>
        <name>ATP</name>
        <dbReference type="ChEBI" id="CHEBI:30616"/>
    </ligand>
</feature>
<sequence>MNEFKPLVFSGVQPTGNLHLGNYLGAIRKFVALQENNDCIYCVVDLHSITAQLVHEDLPGQIRSIAAAFIASGIDPEKHIVFNQSAVPQHAELAWIFNCVARIGWMNRMTQFKDKAGKDRENASLGLLAYPSLMAADILVYRATHVPVGDDQKQHLELTRDIAQKFNIDFMEHIRRGGYGVDIVVGEEPIHAYFPPVEPLIGGPAPRVMSLRDGTKKMSKSDPSDLSRINLMDDADTILKKIRKAKTDPDALPSEADGLKDRPEAENLVGIYAALADRSKEEVLAEFGGQQFSTFKPALADLAVSVLSPITGEMRRLMGDTAHIDAILRKGGERARERAETTMREVREIIGFLQ</sequence>
<reference key="1">
    <citation type="journal article" date="2001" name="Proc. Natl. Acad. Sci. U.S.A.">
        <title>Analysis of the chromosome sequence of the legume symbiont Sinorhizobium meliloti strain 1021.</title>
        <authorList>
            <person name="Capela D."/>
            <person name="Barloy-Hubler F."/>
            <person name="Gouzy J."/>
            <person name="Bothe G."/>
            <person name="Ampe F."/>
            <person name="Batut J."/>
            <person name="Boistard P."/>
            <person name="Becker A."/>
            <person name="Boutry M."/>
            <person name="Cadieu E."/>
            <person name="Dreano S."/>
            <person name="Gloux S."/>
            <person name="Godrie T."/>
            <person name="Goffeau A."/>
            <person name="Kahn D."/>
            <person name="Kiss E."/>
            <person name="Lelaure V."/>
            <person name="Masuy D."/>
            <person name="Pohl T."/>
            <person name="Portetelle D."/>
            <person name="Puehler A."/>
            <person name="Purnelle B."/>
            <person name="Ramsperger U."/>
            <person name="Renard C."/>
            <person name="Thebault P."/>
            <person name="Vandenbol M."/>
            <person name="Weidner S."/>
            <person name="Galibert F."/>
        </authorList>
    </citation>
    <scope>NUCLEOTIDE SEQUENCE [LARGE SCALE GENOMIC DNA]</scope>
    <source>
        <strain>1021</strain>
    </source>
</reference>
<reference key="2">
    <citation type="journal article" date="2001" name="Science">
        <title>The composite genome of the legume symbiont Sinorhizobium meliloti.</title>
        <authorList>
            <person name="Galibert F."/>
            <person name="Finan T.M."/>
            <person name="Long S.R."/>
            <person name="Puehler A."/>
            <person name="Abola P."/>
            <person name="Ampe F."/>
            <person name="Barloy-Hubler F."/>
            <person name="Barnett M.J."/>
            <person name="Becker A."/>
            <person name="Boistard P."/>
            <person name="Bothe G."/>
            <person name="Boutry M."/>
            <person name="Bowser L."/>
            <person name="Buhrmester J."/>
            <person name="Cadieu E."/>
            <person name="Capela D."/>
            <person name="Chain P."/>
            <person name="Cowie A."/>
            <person name="Davis R.W."/>
            <person name="Dreano S."/>
            <person name="Federspiel N.A."/>
            <person name="Fisher R.F."/>
            <person name="Gloux S."/>
            <person name="Godrie T."/>
            <person name="Goffeau A."/>
            <person name="Golding B."/>
            <person name="Gouzy J."/>
            <person name="Gurjal M."/>
            <person name="Hernandez-Lucas I."/>
            <person name="Hong A."/>
            <person name="Huizar L."/>
            <person name="Hyman R.W."/>
            <person name="Jones T."/>
            <person name="Kahn D."/>
            <person name="Kahn M.L."/>
            <person name="Kalman S."/>
            <person name="Keating D.H."/>
            <person name="Kiss E."/>
            <person name="Komp C."/>
            <person name="Lelaure V."/>
            <person name="Masuy D."/>
            <person name="Palm C."/>
            <person name="Peck M.C."/>
            <person name="Pohl T.M."/>
            <person name="Portetelle D."/>
            <person name="Purnelle B."/>
            <person name="Ramsperger U."/>
            <person name="Surzycki R."/>
            <person name="Thebault P."/>
            <person name="Vandenbol M."/>
            <person name="Vorhoelter F.J."/>
            <person name="Weidner S."/>
            <person name="Wells D.H."/>
            <person name="Wong K."/>
            <person name="Yeh K.-C."/>
            <person name="Batut J."/>
        </authorList>
    </citation>
    <scope>NUCLEOTIDE SEQUENCE [LARGE SCALE GENOMIC DNA]</scope>
    <source>
        <strain>1021</strain>
    </source>
</reference>
<proteinExistence type="inferred from homology"/>
<gene>
    <name evidence="1" type="primary">trpS</name>
    <name type="ordered locus">R00399</name>
    <name type="ORF">SMc01121</name>
</gene>
<name>SYW_RHIME</name>
<protein>
    <recommendedName>
        <fullName evidence="1">Tryptophan--tRNA ligase</fullName>
        <ecNumber evidence="1">6.1.1.2</ecNumber>
    </recommendedName>
    <alternativeName>
        <fullName evidence="1">Tryptophanyl-tRNA synthetase</fullName>
        <shortName evidence="1">TrpRS</shortName>
    </alternativeName>
</protein>
<organism>
    <name type="scientific">Rhizobium meliloti (strain 1021)</name>
    <name type="common">Ensifer meliloti</name>
    <name type="synonym">Sinorhizobium meliloti</name>
    <dbReference type="NCBI Taxonomy" id="266834"/>
    <lineage>
        <taxon>Bacteria</taxon>
        <taxon>Pseudomonadati</taxon>
        <taxon>Pseudomonadota</taxon>
        <taxon>Alphaproteobacteria</taxon>
        <taxon>Hyphomicrobiales</taxon>
        <taxon>Rhizobiaceae</taxon>
        <taxon>Sinorhizobium/Ensifer group</taxon>
        <taxon>Sinorhizobium</taxon>
    </lineage>
</organism>